<keyword id="KW-0326">Glycosidase</keyword>
<keyword id="KW-0378">Hydrolase</keyword>
<keyword id="KW-0462">Maltose metabolism</keyword>
<keyword id="KW-1185">Reference proteome</keyword>
<evidence type="ECO:0000250" key="1"/>
<evidence type="ECO:0000269" key="2">
    <source>
    </source>
</evidence>
<evidence type="ECO:0000269" key="3">
    <source>
    </source>
</evidence>
<evidence type="ECO:0000305" key="4"/>
<gene>
    <name type="primary">IMA5</name>
    <name type="ordered locus">YJL216C</name>
    <name type="ORF">HRF581</name>
    <name type="ORF">J0228</name>
</gene>
<accession>P40884</accession>
<accession>D6VVY0</accession>
<proteinExistence type="evidence at transcript level"/>
<comment type="function">
    <text evidence="3">Alpha-glucosidase with specificity for isomaltose, maltose, and palatinose.</text>
</comment>
<comment type="catalytic activity">
    <reaction>
        <text>Hydrolysis of (1-&gt;6)-alpha-D-glucosidic linkages in some oligosaccharides produced from starch and glycogen by alpha-amylase, and in isomaltose.</text>
        <dbReference type="EC" id="3.2.1.10"/>
    </reaction>
</comment>
<comment type="induction">
    <text evidence="2 3">Transcriptionally regulated by PDR8. Expression is increased in response to the addition of maltose, isomaltose, and alpha-methylglucopyranoside.</text>
</comment>
<comment type="similarity">
    <text evidence="4">Belongs to the glycosyl hydrolase 13 family.</text>
</comment>
<feature type="chain" id="PRO_0000054331" description="Oligo-1,6-glucosidase IMA5">
    <location>
        <begin position="1"/>
        <end position="581"/>
    </location>
</feature>
<feature type="active site" description="Nucleophile" evidence="1">
    <location>
        <position position="210"/>
    </location>
</feature>
<feature type="active site" description="Proton donor" evidence="1">
    <location>
        <position position="272"/>
    </location>
</feature>
<feature type="site" description="Transition state stabilizer" evidence="1">
    <location>
        <position position="347"/>
    </location>
</feature>
<name>IMA5_YEAST</name>
<dbReference type="EC" id="3.2.1.10"/>
<dbReference type="EMBL" id="Z34098">
    <property type="protein sequence ID" value="CAA83995.1"/>
    <property type="molecule type" value="Genomic_DNA"/>
</dbReference>
<dbReference type="EMBL" id="Z49491">
    <property type="protein sequence ID" value="CAA89513.1"/>
    <property type="molecule type" value="Genomic_DNA"/>
</dbReference>
<dbReference type="EMBL" id="BK006943">
    <property type="protein sequence ID" value="DAA08596.1"/>
    <property type="molecule type" value="Genomic_DNA"/>
</dbReference>
<dbReference type="PIR" id="S50769">
    <property type="entry name" value="S50769"/>
</dbReference>
<dbReference type="RefSeq" id="NP_012319.1">
    <property type="nucleotide sequence ID" value="NM_001181649.1"/>
</dbReference>
<dbReference type="SMR" id="P40884"/>
<dbReference type="BioGRID" id="33544">
    <property type="interactions" value="101"/>
</dbReference>
<dbReference type="FunCoup" id="P40884">
    <property type="interactions" value="1113"/>
</dbReference>
<dbReference type="STRING" id="4932.YJL216C"/>
<dbReference type="CAZy" id="GH13">
    <property type="family name" value="Glycoside Hydrolase Family 13"/>
</dbReference>
<dbReference type="PaxDb" id="4932-YJL216C"/>
<dbReference type="PeptideAtlas" id="P40884"/>
<dbReference type="EnsemblFungi" id="YJL216C_mRNA">
    <property type="protein sequence ID" value="YJL216C"/>
    <property type="gene ID" value="YJL216C"/>
</dbReference>
<dbReference type="GeneID" id="853214"/>
<dbReference type="KEGG" id="sce:YJL216C"/>
<dbReference type="AGR" id="SGD:S000003752"/>
<dbReference type="SGD" id="S000003752">
    <property type="gene designation" value="IMA5"/>
</dbReference>
<dbReference type="VEuPathDB" id="FungiDB:YJL216C"/>
<dbReference type="eggNOG" id="KOG0471">
    <property type="taxonomic scope" value="Eukaryota"/>
</dbReference>
<dbReference type="GeneTree" id="ENSGT00940000176291"/>
<dbReference type="HOGENOM" id="CLU_006462_1_2_1"/>
<dbReference type="InParanoid" id="P40884"/>
<dbReference type="OMA" id="PNGEKWA"/>
<dbReference type="OrthoDB" id="1740265at2759"/>
<dbReference type="BioCyc" id="YEAST:YJL216C-MONOMER"/>
<dbReference type="BRENDA" id="3.2.1.10">
    <property type="organism ID" value="984"/>
</dbReference>
<dbReference type="BioGRID-ORCS" id="853214">
    <property type="hits" value="0 hits in 10 CRISPR screens"/>
</dbReference>
<dbReference type="PRO" id="PR:P40884"/>
<dbReference type="Proteomes" id="UP000002311">
    <property type="component" value="Chromosome X"/>
</dbReference>
<dbReference type="RNAct" id="P40884">
    <property type="molecule type" value="protein"/>
</dbReference>
<dbReference type="GO" id="GO:0004558">
    <property type="term" value="F:alpha-1,4-glucosidase activity"/>
    <property type="evidence" value="ECO:0000318"/>
    <property type="project" value="GO_Central"/>
</dbReference>
<dbReference type="GO" id="GO:0004556">
    <property type="term" value="F:alpha-amylase activity"/>
    <property type="evidence" value="ECO:0000318"/>
    <property type="project" value="GO_Central"/>
</dbReference>
<dbReference type="GO" id="GO:0033934">
    <property type="term" value="F:glucan 1,4-alpha-maltotriohydrolase activity"/>
    <property type="evidence" value="ECO:0000318"/>
    <property type="project" value="GO_Central"/>
</dbReference>
<dbReference type="GO" id="GO:0004574">
    <property type="term" value="F:oligo-1,6-glucosidase activity"/>
    <property type="evidence" value="ECO:0000314"/>
    <property type="project" value="SGD"/>
</dbReference>
<dbReference type="GO" id="GO:0004575">
    <property type="term" value="F:sucrose alpha-glucosidase activity"/>
    <property type="evidence" value="ECO:0000318"/>
    <property type="project" value="GO_Central"/>
</dbReference>
<dbReference type="GO" id="GO:0046352">
    <property type="term" value="P:disaccharide catabolic process"/>
    <property type="evidence" value="ECO:0000316"/>
    <property type="project" value="SGD"/>
</dbReference>
<dbReference type="GO" id="GO:0000025">
    <property type="term" value="P:maltose catabolic process"/>
    <property type="evidence" value="ECO:0000318"/>
    <property type="project" value="GO_Central"/>
</dbReference>
<dbReference type="GO" id="GO:0005987">
    <property type="term" value="P:sucrose catabolic process"/>
    <property type="evidence" value="ECO:0000318"/>
    <property type="project" value="GO_Central"/>
</dbReference>
<dbReference type="CDD" id="cd11333">
    <property type="entry name" value="AmyAc_SI_OligoGlu_DGase"/>
    <property type="match status" value="1"/>
</dbReference>
<dbReference type="FunFam" id="3.20.20.80:FF:000064">
    <property type="entry name" value="Oligo-1,6-glucosidase"/>
    <property type="match status" value="1"/>
</dbReference>
<dbReference type="FunFam" id="3.90.400.10:FF:000004">
    <property type="entry name" value="Oligo-1,6-glucosidase"/>
    <property type="match status" value="1"/>
</dbReference>
<dbReference type="FunFam" id="3.20.20.80:FF:000087">
    <property type="entry name" value="Oligo-1,6-glucosidase IMA1"/>
    <property type="match status" value="1"/>
</dbReference>
<dbReference type="FunFam" id="2.60.40.1180:FF:000007">
    <property type="entry name" value="Sucrose isomerase"/>
    <property type="match status" value="1"/>
</dbReference>
<dbReference type="Gene3D" id="3.20.20.80">
    <property type="entry name" value="Glycosidases"/>
    <property type="match status" value="1"/>
</dbReference>
<dbReference type="Gene3D" id="2.60.40.1180">
    <property type="entry name" value="Golgi alpha-mannosidase II"/>
    <property type="match status" value="1"/>
</dbReference>
<dbReference type="Gene3D" id="3.90.400.10">
    <property type="entry name" value="Oligo-1,6-glucosidase, Domain 2"/>
    <property type="match status" value="1"/>
</dbReference>
<dbReference type="InterPro" id="IPR006047">
    <property type="entry name" value="Glyco_hydro_13_cat_dom"/>
</dbReference>
<dbReference type="InterPro" id="IPR013780">
    <property type="entry name" value="Glyco_hydro_b"/>
</dbReference>
<dbReference type="InterPro" id="IPR017853">
    <property type="entry name" value="Glycoside_hydrolase_SF"/>
</dbReference>
<dbReference type="InterPro" id="IPR045857">
    <property type="entry name" value="O16G_dom_2"/>
</dbReference>
<dbReference type="PANTHER" id="PTHR10357">
    <property type="entry name" value="ALPHA-AMYLASE FAMILY MEMBER"/>
    <property type="match status" value="1"/>
</dbReference>
<dbReference type="PANTHER" id="PTHR10357:SF179">
    <property type="entry name" value="NEUTRAL AND BASIC AMINO ACID TRANSPORT PROTEIN RBAT"/>
    <property type="match status" value="1"/>
</dbReference>
<dbReference type="Pfam" id="PF00128">
    <property type="entry name" value="Alpha-amylase"/>
    <property type="match status" value="1"/>
</dbReference>
<dbReference type="SMART" id="SM00642">
    <property type="entry name" value="Aamy"/>
    <property type="match status" value="1"/>
</dbReference>
<dbReference type="SUPFAM" id="SSF51445">
    <property type="entry name" value="(Trans)glycosidases"/>
    <property type="match status" value="1"/>
</dbReference>
<dbReference type="SUPFAM" id="SSF51011">
    <property type="entry name" value="Glycosyl hydrolase domain"/>
    <property type="match status" value="1"/>
</dbReference>
<organism>
    <name type="scientific">Saccharomyces cerevisiae (strain ATCC 204508 / S288c)</name>
    <name type="common">Baker's yeast</name>
    <dbReference type="NCBI Taxonomy" id="559292"/>
    <lineage>
        <taxon>Eukaryota</taxon>
        <taxon>Fungi</taxon>
        <taxon>Dikarya</taxon>
        <taxon>Ascomycota</taxon>
        <taxon>Saccharomycotina</taxon>
        <taxon>Saccharomycetes</taxon>
        <taxon>Saccharomycetales</taxon>
        <taxon>Saccharomycetaceae</taxon>
        <taxon>Saccharomyces</taxon>
    </lineage>
</organism>
<protein>
    <recommendedName>
        <fullName>Oligo-1,6-glucosidase IMA5</fullName>
        <ecNumber>3.2.1.10</ecNumber>
    </recommendedName>
    <alternativeName>
        <fullName>Alpha-glucosidase</fullName>
    </alternativeName>
    <alternativeName>
        <fullName>Isomaltase 5</fullName>
    </alternativeName>
</protein>
<sequence>MTIIHNPKWWKEATVYQIYPASFKDSNNDGWGDLAGITSKLDYVKELGVDAIWVCPFYDSPQEDMGYDIANYEKVWPRYGTNEDCFQMIEEAHKRGIKVIVDLVINHCSEEHEWFKESRSSKANPKRDWFFWRPPKGYDEKGNPIPPNNWRSFFGGSAWRYDEKTGEFFLHVFALGQPDFNWENEECRKAIYDSSVGYWLRHNVDGFRIDVGSMYSKVEGLPDAPITDPTVPYQKGTEFFINGPRIHEYHKEMHNYMLSQVPEGKEIMTVGEVGIGNEDDFRVYTSAKEGELNMMFNFKHTSVGENPKCKYELIPFTLKDFKLALAESFLFIENTDCWSTIYLENHDQPRSVSRFGSDSPKWREISSKMLATLIISLTGTVFIYQGQELGMPNFKNRKIEQIKCVEGTGTYAAIKRDYGEDSEKMKKFFEALALISRDHGRTPFPWSADEPSAGFSKDAKPWIDMNESFRDGINAEAELKDKNSVFFFWKKALQVRKEHKDILVYGHNFQFIDLDNDKLFMFTKDTDNKKMFAVFNFSSDNTDFSVPDNEASYTMFFGNYANSNGDSRTLQPWEGRLYLLK</sequence>
<reference key="1">
    <citation type="journal article" date="1994" name="Yeast">
        <title>Sequence analysis of a 40.2 kb DNA fragment located near the left telomere of yeast chromosome X.</title>
        <authorList>
            <person name="Vandenbol M."/>
            <person name="Durand P."/>
            <person name="Bolle P.-A."/>
            <person name="Dion C."/>
            <person name="Portetelle D."/>
            <person name="Hilger F."/>
        </authorList>
    </citation>
    <scope>NUCLEOTIDE SEQUENCE [GENOMIC DNA]</scope>
    <source>
        <strain>ATCC 204508 / S288c</strain>
    </source>
</reference>
<reference key="2">
    <citation type="journal article" date="1996" name="EMBO J.">
        <title>Complete nucleotide sequence of Saccharomyces cerevisiae chromosome X.</title>
        <authorList>
            <person name="Galibert F."/>
            <person name="Alexandraki D."/>
            <person name="Baur A."/>
            <person name="Boles E."/>
            <person name="Chalwatzis N."/>
            <person name="Chuat J.-C."/>
            <person name="Coster F."/>
            <person name="Cziepluch C."/>
            <person name="de Haan M."/>
            <person name="Domdey H."/>
            <person name="Durand P."/>
            <person name="Entian K.-D."/>
            <person name="Gatius M."/>
            <person name="Goffeau A."/>
            <person name="Grivell L.A."/>
            <person name="Hennemann A."/>
            <person name="Herbert C.J."/>
            <person name="Heumann K."/>
            <person name="Hilger F."/>
            <person name="Hollenberg C.P."/>
            <person name="Huang M.-E."/>
            <person name="Jacq C."/>
            <person name="Jauniaux J.-C."/>
            <person name="Katsoulou C."/>
            <person name="Kirchrath L."/>
            <person name="Kleine K."/>
            <person name="Kordes E."/>
            <person name="Koetter P."/>
            <person name="Liebl S."/>
            <person name="Louis E.J."/>
            <person name="Manus V."/>
            <person name="Mewes H.-W."/>
            <person name="Miosga T."/>
            <person name="Obermaier B."/>
            <person name="Perea J."/>
            <person name="Pohl T.M."/>
            <person name="Portetelle D."/>
            <person name="Pujol A."/>
            <person name="Purnelle B."/>
            <person name="Ramezani Rad M."/>
            <person name="Rasmussen S.W."/>
            <person name="Rose M."/>
            <person name="Rossau R."/>
            <person name="Schaaff-Gerstenschlaeger I."/>
            <person name="Smits P.H.M."/>
            <person name="Scarcez T."/>
            <person name="Soriano N."/>
            <person name="To Van D."/>
            <person name="Tzermia M."/>
            <person name="Van Broekhoven A."/>
            <person name="Vandenbol M."/>
            <person name="Wedler H."/>
            <person name="von Wettstein D."/>
            <person name="Wambutt R."/>
            <person name="Zagulski M."/>
            <person name="Zollner A."/>
            <person name="Karpfinger-Hartl L."/>
        </authorList>
    </citation>
    <scope>NUCLEOTIDE SEQUENCE [LARGE SCALE GENOMIC DNA]</scope>
    <source>
        <strain>ATCC 204508 / S288c</strain>
    </source>
</reference>
<reference key="3">
    <citation type="journal article" date="2014" name="G3 (Bethesda)">
        <title>The reference genome sequence of Saccharomyces cerevisiae: Then and now.</title>
        <authorList>
            <person name="Engel S.R."/>
            <person name="Dietrich F.S."/>
            <person name="Fisk D.G."/>
            <person name="Binkley G."/>
            <person name="Balakrishnan R."/>
            <person name="Costanzo M.C."/>
            <person name="Dwight S.S."/>
            <person name="Hitz B.C."/>
            <person name="Karra K."/>
            <person name="Nash R.S."/>
            <person name="Weng S."/>
            <person name="Wong E.D."/>
            <person name="Lloyd P."/>
            <person name="Skrzypek M.S."/>
            <person name="Miyasato S.R."/>
            <person name="Simison M."/>
            <person name="Cherry J.M."/>
        </authorList>
    </citation>
    <scope>GENOME REANNOTATION</scope>
    <source>
        <strain>ATCC 204508 / S288c</strain>
    </source>
</reference>
<reference key="4">
    <citation type="journal article" date="2003" name="J. Biol. Chem.">
        <title>A general strategy to uncover transcription factor properties identifies a new regulator of drug resistance in yeast.</title>
        <authorList>
            <person name="Hikkel I."/>
            <person name="Lucau-Danila A."/>
            <person name="Delaveau T."/>
            <person name="Marc P."/>
            <person name="Devaux F."/>
            <person name="Jacq C."/>
        </authorList>
    </citation>
    <scope>INDUCTION</scope>
</reference>
<reference key="5">
    <citation type="journal article" date="2010" name="J. Biol. Chem.">
        <title>Characterization of a new multigene family encoding isomaltases in the yeast Saccharomyces cerevisiae, the IMA family.</title>
        <authorList>
            <person name="Teste M.A."/>
            <person name="Francois J.M."/>
            <person name="Parrou J.L."/>
        </authorList>
    </citation>
    <scope>FUNCTION</scope>
    <scope>INDUCTION</scope>
</reference>